<reference key="1">
    <citation type="submission" date="2005-09" db="EMBL/GenBank/DDBJ databases">
        <title>Complete sequence of chromosome 1 of Rhodobacter sphaeroides 2.4.1.</title>
        <authorList>
            <person name="Copeland A."/>
            <person name="Lucas S."/>
            <person name="Lapidus A."/>
            <person name="Barry K."/>
            <person name="Detter J.C."/>
            <person name="Glavina T."/>
            <person name="Hammon N."/>
            <person name="Israni S."/>
            <person name="Pitluck S."/>
            <person name="Richardson P."/>
            <person name="Mackenzie C."/>
            <person name="Choudhary M."/>
            <person name="Larimer F."/>
            <person name="Hauser L.J."/>
            <person name="Land M."/>
            <person name="Donohue T.J."/>
            <person name="Kaplan S."/>
        </authorList>
    </citation>
    <scope>NUCLEOTIDE SEQUENCE [LARGE SCALE GENOMIC DNA]</scope>
    <source>
        <strain>ATCC 17023 / DSM 158 / JCM 6121 / CCUG 31486 / LMG 2827 / NBRC 12203 / NCIMB 8253 / ATH 2.4.1.</strain>
    </source>
</reference>
<keyword id="KW-0963">Cytoplasm</keyword>
<keyword id="KW-0251">Elongation factor</keyword>
<keyword id="KW-0342">GTP-binding</keyword>
<keyword id="KW-0547">Nucleotide-binding</keyword>
<keyword id="KW-0648">Protein biosynthesis</keyword>
<keyword id="KW-1185">Reference proteome</keyword>
<name>EFG_CERS4</name>
<sequence>MARDYPLELCRNFGIMAHIDAGKTTTTERILYYTGKSHKIGEVHDGAATMDWMEQEQERGITITSAATTTFWERTEDGKTPLTPKHRFNIIDTPGHVDFTIEVERSLAVLDGAVCLLDANAGVEPQTETVWRQADRYKVPRIVFVNKMDKIGADFFNCVKMIKDRTGATPAPIALPIGAEDKLEGIIDLVTMQEWVYQGEDLGASWIIKDVRDELKAEAEEWRGKLIELAVEQDDEAMEAYLEGNEPDVPTLRKLIRKGCLAMAFVPVTAGSAFKNKGVQPVLNSVIDYLPSPLDVPAYMGFAPGDETETRNIARSADDSQPFAALAFKIMNDPFVGSLTFTRLYSGVLKKGDQMVNSTKGKRERVGRMMMMHAINREEIDEAFAGDIIALAGLKETTTGDTLCDPANQVVLETMTFPEPVIEIAVEPKTKADQEKMGLALARLAAEDPSFRVETDFESGQTIMKGMGELHLDILVDRMKREFKVEANIGAPQVAYRETISREAEIDYTHKKQTGGTGQFARVKLVITPTEPGEGYSFESKIVGGAVPKEYIPGVEKGIKSVMDSGPLAGFPVIDFRVALIDGAFHDVDSSVLAFEIASRAAMREGLKKAGAKLLEPIMKVEVVTPEEYTGGIIGDLTSRRGMVQGQDTRGNANVINAFVPLANMFGYINTLRSMSSGRAVFTMHFDHYDAVPQNISDEIQKKYA</sequence>
<protein>
    <recommendedName>
        <fullName evidence="1">Elongation factor G</fullName>
        <shortName evidence="1">EF-G</shortName>
    </recommendedName>
</protein>
<proteinExistence type="inferred from homology"/>
<organism>
    <name type="scientific">Cereibacter sphaeroides (strain ATCC 17023 / DSM 158 / JCM 6121 / CCUG 31486 / LMG 2827 / NBRC 12203 / NCIMB 8253 / ATH 2.4.1.)</name>
    <name type="common">Rhodobacter sphaeroides</name>
    <dbReference type="NCBI Taxonomy" id="272943"/>
    <lineage>
        <taxon>Bacteria</taxon>
        <taxon>Pseudomonadati</taxon>
        <taxon>Pseudomonadota</taxon>
        <taxon>Alphaproteobacteria</taxon>
        <taxon>Rhodobacterales</taxon>
        <taxon>Paracoccaceae</taxon>
        <taxon>Cereibacter</taxon>
    </lineage>
</organism>
<accession>Q3J5S5</accession>
<evidence type="ECO:0000255" key="1">
    <source>
        <dbReference type="HAMAP-Rule" id="MF_00054"/>
    </source>
</evidence>
<feature type="chain" id="PRO_0000225236" description="Elongation factor G">
    <location>
        <begin position="1"/>
        <end position="705"/>
    </location>
</feature>
<feature type="domain" description="tr-type G">
    <location>
        <begin position="8"/>
        <end position="294"/>
    </location>
</feature>
<feature type="binding site" evidence="1">
    <location>
        <begin position="17"/>
        <end position="24"/>
    </location>
    <ligand>
        <name>GTP</name>
        <dbReference type="ChEBI" id="CHEBI:37565"/>
    </ligand>
</feature>
<feature type="binding site" evidence="1">
    <location>
        <begin position="92"/>
        <end position="96"/>
    </location>
    <ligand>
        <name>GTP</name>
        <dbReference type="ChEBI" id="CHEBI:37565"/>
    </ligand>
</feature>
<feature type="binding site" evidence="1">
    <location>
        <begin position="146"/>
        <end position="149"/>
    </location>
    <ligand>
        <name>GTP</name>
        <dbReference type="ChEBI" id="CHEBI:37565"/>
    </ligand>
</feature>
<gene>
    <name evidence="1" type="primary">fusA</name>
    <name type="ordered locus">RHOS4_02910</name>
    <name type="ORF">RSP_1708</name>
</gene>
<comment type="function">
    <text evidence="1">Catalyzes the GTP-dependent ribosomal translocation step during translation elongation. During this step, the ribosome changes from the pre-translocational (PRE) to the post-translocational (POST) state as the newly formed A-site-bound peptidyl-tRNA and P-site-bound deacylated tRNA move to the P and E sites, respectively. Catalyzes the coordinated movement of the two tRNA molecules, the mRNA and conformational changes in the ribosome.</text>
</comment>
<comment type="subcellular location">
    <subcellularLocation>
        <location evidence="1">Cytoplasm</location>
    </subcellularLocation>
</comment>
<comment type="similarity">
    <text evidence="1">Belongs to the TRAFAC class translation factor GTPase superfamily. Classic translation factor GTPase family. EF-G/EF-2 subfamily.</text>
</comment>
<dbReference type="EMBL" id="CP000143">
    <property type="protein sequence ID" value="ABA77859.1"/>
    <property type="molecule type" value="Genomic_DNA"/>
</dbReference>
<dbReference type="RefSeq" id="WP_011336951.1">
    <property type="nucleotide sequence ID" value="NC_007493.2"/>
</dbReference>
<dbReference type="RefSeq" id="YP_351760.1">
    <property type="nucleotide sequence ID" value="NC_007493.2"/>
</dbReference>
<dbReference type="SMR" id="Q3J5S5"/>
<dbReference type="STRING" id="272943.RSP_1708"/>
<dbReference type="EnsemblBacteria" id="ABA77859">
    <property type="protein sequence ID" value="ABA77859"/>
    <property type="gene ID" value="RSP_1708"/>
</dbReference>
<dbReference type="GeneID" id="3718918"/>
<dbReference type="KEGG" id="rsp:RSP_1708"/>
<dbReference type="PATRIC" id="fig|272943.9.peg.590"/>
<dbReference type="eggNOG" id="COG0480">
    <property type="taxonomic scope" value="Bacteria"/>
</dbReference>
<dbReference type="OrthoDB" id="9802948at2"/>
<dbReference type="PhylomeDB" id="Q3J5S5"/>
<dbReference type="Proteomes" id="UP000002703">
    <property type="component" value="Chromosome 1"/>
</dbReference>
<dbReference type="GO" id="GO:0005737">
    <property type="term" value="C:cytoplasm"/>
    <property type="evidence" value="ECO:0007669"/>
    <property type="project" value="UniProtKB-SubCell"/>
</dbReference>
<dbReference type="GO" id="GO:0005525">
    <property type="term" value="F:GTP binding"/>
    <property type="evidence" value="ECO:0007669"/>
    <property type="project" value="UniProtKB-UniRule"/>
</dbReference>
<dbReference type="GO" id="GO:0003924">
    <property type="term" value="F:GTPase activity"/>
    <property type="evidence" value="ECO:0007669"/>
    <property type="project" value="InterPro"/>
</dbReference>
<dbReference type="GO" id="GO:0097216">
    <property type="term" value="F:guanosine tetraphosphate binding"/>
    <property type="evidence" value="ECO:0007669"/>
    <property type="project" value="UniProtKB-ARBA"/>
</dbReference>
<dbReference type="GO" id="GO:0003746">
    <property type="term" value="F:translation elongation factor activity"/>
    <property type="evidence" value="ECO:0007669"/>
    <property type="project" value="UniProtKB-UniRule"/>
</dbReference>
<dbReference type="GO" id="GO:0032790">
    <property type="term" value="P:ribosome disassembly"/>
    <property type="evidence" value="ECO:0007669"/>
    <property type="project" value="TreeGrafter"/>
</dbReference>
<dbReference type="CDD" id="cd01886">
    <property type="entry name" value="EF-G"/>
    <property type="match status" value="1"/>
</dbReference>
<dbReference type="CDD" id="cd16262">
    <property type="entry name" value="EFG_III"/>
    <property type="match status" value="1"/>
</dbReference>
<dbReference type="CDD" id="cd01434">
    <property type="entry name" value="EFG_mtEFG1_IV"/>
    <property type="match status" value="1"/>
</dbReference>
<dbReference type="CDD" id="cd03713">
    <property type="entry name" value="EFG_mtEFG_C"/>
    <property type="match status" value="1"/>
</dbReference>
<dbReference type="CDD" id="cd04088">
    <property type="entry name" value="EFG_mtEFG_II"/>
    <property type="match status" value="1"/>
</dbReference>
<dbReference type="FunFam" id="2.40.30.10:FF:000006">
    <property type="entry name" value="Elongation factor G"/>
    <property type="match status" value="1"/>
</dbReference>
<dbReference type="FunFam" id="3.30.230.10:FF:000003">
    <property type="entry name" value="Elongation factor G"/>
    <property type="match status" value="1"/>
</dbReference>
<dbReference type="FunFam" id="3.30.70.240:FF:000001">
    <property type="entry name" value="Elongation factor G"/>
    <property type="match status" value="1"/>
</dbReference>
<dbReference type="FunFam" id="3.30.70.870:FF:000001">
    <property type="entry name" value="Elongation factor G"/>
    <property type="match status" value="1"/>
</dbReference>
<dbReference type="FunFam" id="3.40.50.300:FF:000029">
    <property type="entry name" value="Elongation factor G"/>
    <property type="match status" value="1"/>
</dbReference>
<dbReference type="Gene3D" id="3.30.230.10">
    <property type="match status" value="1"/>
</dbReference>
<dbReference type="Gene3D" id="3.30.70.240">
    <property type="match status" value="1"/>
</dbReference>
<dbReference type="Gene3D" id="3.30.70.870">
    <property type="entry name" value="Elongation Factor G (Translational Gtpase), domain 3"/>
    <property type="match status" value="1"/>
</dbReference>
<dbReference type="Gene3D" id="3.40.50.300">
    <property type="entry name" value="P-loop containing nucleotide triphosphate hydrolases"/>
    <property type="match status" value="1"/>
</dbReference>
<dbReference type="Gene3D" id="2.40.30.10">
    <property type="entry name" value="Translation factors"/>
    <property type="match status" value="1"/>
</dbReference>
<dbReference type="HAMAP" id="MF_00054_B">
    <property type="entry name" value="EF_G_EF_2_B"/>
    <property type="match status" value="1"/>
</dbReference>
<dbReference type="InterPro" id="IPR041095">
    <property type="entry name" value="EFG_II"/>
</dbReference>
<dbReference type="InterPro" id="IPR009022">
    <property type="entry name" value="EFG_III"/>
</dbReference>
<dbReference type="InterPro" id="IPR035647">
    <property type="entry name" value="EFG_III/V"/>
</dbReference>
<dbReference type="InterPro" id="IPR047872">
    <property type="entry name" value="EFG_IV"/>
</dbReference>
<dbReference type="InterPro" id="IPR035649">
    <property type="entry name" value="EFG_V"/>
</dbReference>
<dbReference type="InterPro" id="IPR000640">
    <property type="entry name" value="EFG_V-like"/>
</dbReference>
<dbReference type="InterPro" id="IPR004161">
    <property type="entry name" value="EFTu-like_2"/>
</dbReference>
<dbReference type="InterPro" id="IPR031157">
    <property type="entry name" value="G_TR_CS"/>
</dbReference>
<dbReference type="InterPro" id="IPR027417">
    <property type="entry name" value="P-loop_NTPase"/>
</dbReference>
<dbReference type="InterPro" id="IPR020568">
    <property type="entry name" value="Ribosomal_Su5_D2-typ_SF"/>
</dbReference>
<dbReference type="InterPro" id="IPR014721">
    <property type="entry name" value="Ribsml_uS5_D2-typ_fold_subgr"/>
</dbReference>
<dbReference type="InterPro" id="IPR005225">
    <property type="entry name" value="Small_GTP-bd"/>
</dbReference>
<dbReference type="InterPro" id="IPR000795">
    <property type="entry name" value="T_Tr_GTP-bd_dom"/>
</dbReference>
<dbReference type="InterPro" id="IPR009000">
    <property type="entry name" value="Transl_B-barrel_sf"/>
</dbReference>
<dbReference type="InterPro" id="IPR004540">
    <property type="entry name" value="Transl_elong_EFG/EF2"/>
</dbReference>
<dbReference type="InterPro" id="IPR005517">
    <property type="entry name" value="Transl_elong_EFG/EF2_IV"/>
</dbReference>
<dbReference type="NCBIfam" id="TIGR00484">
    <property type="entry name" value="EF-G"/>
    <property type="match status" value="1"/>
</dbReference>
<dbReference type="NCBIfam" id="NF009381">
    <property type="entry name" value="PRK12740.1-5"/>
    <property type="match status" value="1"/>
</dbReference>
<dbReference type="NCBIfam" id="TIGR00231">
    <property type="entry name" value="small_GTP"/>
    <property type="match status" value="1"/>
</dbReference>
<dbReference type="PANTHER" id="PTHR43261:SF1">
    <property type="entry name" value="RIBOSOME-RELEASING FACTOR 2, MITOCHONDRIAL"/>
    <property type="match status" value="1"/>
</dbReference>
<dbReference type="PANTHER" id="PTHR43261">
    <property type="entry name" value="TRANSLATION ELONGATION FACTOR G-RELATED"/>
    <property type="match status" value="1"/>
</dbReference>
<dbReference type="Pfam" id="PF00679">
    <property type="entry name" value="EFG_C"/>
    <property type="match status" value="1"/>
</dbReference>
<dbReference type="Pfam" id="PF14492">
    <property type="entry name" value="EFG_III"/>
    <property type="match status" value="1"/>
</dbReference>
<dbReference type="Pfam" id="PF03764">
    <property type="entry name" value="EFG_IV"/>
    <property type="match status" value="1"/>
</dbReference>
<dbReference type="Pfam" id="PF00009">
    <property type="entry name" value="GTP_EFTU"/>
    <property type="match status" value="1"/>
</dbReference>
<dbReference type="Pfam" id="PF03144">
    <property type="entry name" value="GTP_EFTU_D2"/>
    <property type="match status" value="1"/>
</dbReference>
<dbReference type="PRINTS" id="PR00315">
    <property type="entry name" value="ELONGATNFCT"/>
</dbReference>
<dbReference type="SMART" id="SM00838">
    <property type="entry name" value="EFG_C"/>
    <property type="match status" value="1"/>
</dbReference>
<dbReference type="SMART" id="SM00889">
    <property type="entry name" value="EFG_IV"/>
    <property type="match status" value="1"/>
</dbReference>
<dbReference type="SUPFAM" id="SSF54980">
    <property type="entry name" value="EF-G C-terminal domain-like"/>
    <property type="match status" value="2"/>
</dbReference>
<dbReference type="SUPFAM" id="SSF52540">
    <property type="entry name" value="P-loop containing nucleoside triphosphate hydrolases"/>
    <property type="match status" value="1"/>
</dbReference>
<dbReference type="SUPFAM" id="SSF54211">
    <property type="entry name" value="Ribosomal protein S5 domain 2-like"/>
    <property type="match status" value="1"/>
</dbReference>
<dbReference type="SUPFAM" id="SSF50447">
    <property type="entry name" value="Translation proteins"/>
    <property type="match status" value="1"/>
</dbReference>
<dbReference type="PROSITE" id="PS00301">
    <property type="entry name" value="G_TR_1"/>
    <property type="match status" value="1"/>
</dbReference>
<dbReference type="PROSITE" id="PS51722">
    <property type="entry name" value="G_TR_2"/>
    <property type="match status" value="1"/>
</dbReference>